<name>HPGDS_MOUSE</name>
<protein>
    <recommendedName>
        <fullName>Hematopoietic prostaglandin D synthase</fullName>
        <shortName>H-PGDS</shortName>
        <ecNumber evidence="3">5.3.99.2</ecNumber>
    </recommendedName>
    <alternativeName>
        <fullName>GST class-sigma</fullName>
    </alternativeName>
    <alternativeName>
        <fullName>Glutathione S-transferase</fullName>
        <ecNumber evidence="3">2.5.1.18</ecNumber>
    </alternativeName>
    <alternativeName>
        <fullName>Glutathione-dependent PGD synthase</fullName>
    </alternativeName>
    <alternativeName>
        <fullName>Glutathione-requiring prostaglandin D synthase</fullName>
    </alternativeName>
    <alternativeName>
        <fullName>Prostaglandin-H2 D-isomerase</fullName>
    </alternativeName>
</protein>
<evidence type="ECO:0000250" key="1"/>
<evidence type="ECO:0000250" key="2">
    <source>
        <dbReference type="UniProtKB" id="O60760"/>
    </source>
</evidence>
<evidence type="ECO:0000269" key="3">
    <source>
    </source>
</evidence>
<evidence type="ECO:0000269" key="4">
    <source>
    </source>
</evidence>
<evidence type="ECO:0000305" key="5"/>
<evidence type="ECO:0000305" key="6">
    <source>
    </source>
</evidence>
<evidence type="ECO:0000312" key="7">
    <source>
        <dbReference type="MGI" id="MGI:1859384"/>
    </source>
</evidence>
<organism>
    <name type="scientific">Mus musculus</name>
    <name type="common">Mouse</name>
    <dbReference type="NCBI Taxonomy" id="10090"/>
    <lineage>
        <taxon>Eukaryota</taxon>
        <taxon>Metazoa</taxon>
        <taxon>Chordata</taxon>
        <taxon>Craniata</taxon>
        <taxon>Vertebrata</taxon>
        <taxon>Euteleostomi</taxon>
        <taxon>Mammalia</taxon>
        <taxon>Eutheria</taxon>
        <taxon>Euarchontoglires</taxon>
        <taxon>Glires</taxon>
        <taxon>Rodentia</taxon>
        <taxon>Myomorpha</taxon>
        <taxon>Muroidea</taxon>
        <taxon>Muridae</taxon>
        <taxon>Murinae</taxon>
        <taxon>Mus</taxon>
        <taxon>Mus</taxon>
    </lineage>
</organism>
<gene>
    <name evidence="7" type="primary">Hpgds</name>
    <name type="synonym">Gsts</name>
    <name type="synonym">Pgds</name>
    <name type="synonym">Ptgds2</name>
</gene>
<sequence>MPNYKLLYFNMRGRAEIIRYIFAYLDIKYEDHRIEQADWPKIKPTLPFGKIPVLEVEGLTIHQSLAIARYLTKNTDLAGKTALEQCQADAVVDTLDDFMSLFPWAEKDQDLKERMFNELLTHQAPRLLKDLDTYLGDKEWFIGNYVTWADFYWDICSTTLLVLKPGLLDIYPKLVSLRNKVQAIPAISAWILKRPQTKL</sequence>
<comment type="function">
    <text evidence="3 4">Bifunctional enzyme which catalyzes both the conversion of PGH2 to PGD2, a prostaglandin involved in smooth muscle contraction/relaxation and a potent inhibitor of platelet aggregation, and the conjugation of glutathione with a wide range of aryl halides and organic isothiocyanates. Also exhibits low glutathione-peroxidase activity.</text>
</comment>
<comment type="catalytic activity">
    <reaction evidence="3">
        <text>prostaglandin H2 = prostaglandin D2</text>
        <dbReference type="Rhea" id="RHEA:10600"/>
        <dbReference type="ChEBI" id="CHEBI:57405"/>
        <dbReference type="ChEBI" id="CHEBI:57406"/>
        <dbReference type="EC" id="5.3.99.2"/>
    </reaction>
    <physiologicalReaction direction="left-to-right" evidence="6">
        <dbReference type="Rhea" id="RHEA:10601"/>
    </physiologicalReaction>
</comment>
<comment type="catalytic activity">
    <reaction evidence="3">
        <text>RX + glutathione = an S-substituted glutathione + a halide anion + H(+)</text>
        <dbReference type="Rhea" id="RHEA:16437"/>
        <dbReference type="ChEBI" id="CHEBI:15378"/>
        <dbReference type="ChEBI" id="CHEBI:16042"/>
        <dbReference type="ChEBI" id="CHEBI:17792"/>
        <dbReference type="ChEBI" id="CHEBI:57925"/>
        <dbReference type="ChEBI" id="CHEBI:90779"/>
        <dbReference type="EC" id="2.5.1.18"/>
    </reaction>
</comment>
<comment type="catalytic activity">
    <reaction evidence="2">
        <text>2-glyceryl-prostaglandin H2 = 2-glyceryl-prostaglandin D2</text>
        <dbReference type="Rhea" id="RHEA:51232"/>
        <dbReference type="ChEBI" id="CHEBI:85166"/>
        <dbReference type="ChEBI" id="CHEBI:133979"/>
    </reaction>
    <physiologicalReaction direction="left-to-right" evidence="2">
        <dbReference type="Rhea" id="RHEA:51233"/>
    </physiologicalReaction>
</comment>
<comment type="cofactor">
    <cofactor evidence="3">
        <name>glutathione</name>
        <dbReference type="ChEBI" id="CHEBI:57925"/>
    </cofactor>
    <text evidence="3">Glutathione is required for the prostaglandin D synthase activity.</text>
</comment>
<comment type="subunit">
    <text evidence="1">Homodimer.</text>
</comment>
<comment type="subcellular location">
    <subcellularLocation>
        <location>Cytoplasm</location>
    </subcellularLocation>
</comment>
<comment type="tissue specificity">
    <text evidence="3">Expressed in skin and oviduct.</text>
</comment>
<comment type="similarity">
    <text evidence="5">Belongs to the GST superfamily. Sigma family.</text>
</comment>
<reference key="1">
    <citation type="journal article" date="2000" name="Eur. J. Biochem.">
        <title>Structure and chromosomal localization of human and mouse genes for hematopoietic prostaglandin D synthase.</title>
        <authorList>
            <person name="Kanaoka Y."/>
            <person name="Fujimori K."/>
            <person name="Kikuno R."/>
            <person name="Sakaguchi Y."/>
            <person name="Urade Y."/>
            <person name="Hayaishi O."/>
        </authorList>
    </citation>
    <scope>NUCLEOTIDE SEQUENCE [GENOMIC DNA / MRNA]</scope>
    <scope>FUNCTION</scope>
    <scope>CATALYTIC ACTIVITY</scope>
    <scope>COFACTOR</scope>
    <scope>TISSUE SPECIFICITY</scope>
    <source>
        <strain>129/Sv</strain>
        <strain>C57BL/6J</strain>
        <tissue>Oviduct</tissue>
    </source>
</reference>
<reference key="2">
    <citation type="journal article" date="2005" name="Science">
        <title>The transcriptional landscape of the mammalian genome.</title>
        <authorList>
            <person name="Carninci P."/>
            <person name="Kasukawa T."/>
            <person name="Katayama S."/>
            <person name="Gough J."/>
            <person name="Frith M.C."/>
            <person name="Maeda N."/>
            <person name="Oyama R."/>
            <person name="Ravasi T."/>
            <person name="Lenhard B."/>
            <person name="Wells C."/>
            <person name="Kodzius R."/>
            <person name="Shimokawa K."/>
            <person name="Bajic V.B."/>
            <person name="Brenner S.E."/>
            <person name="Batalov S."/>
            <person name="Forrest A.R."/>
            <person name="Zavolan M."/>
            <person name="Davis M.J."/>
            <person name="Wilming L.G."/>
            <person name="Aidinis V."/>
            <person name="Allen J.E."/>
            <person name="Ambesi-Impiombato A."/>
            <person name="Apweiler R."/>
            <person name="Aturaliya R.N."/>
            <person name="Bailey T.L."/>
            <person name="Bansal M."/>
            <person name="Baxter L."/>
            <person name="Beisel K.W."/>
            <person name="Bersano T."/>
            <person name="Bono H."/>
            <person name="Chalk A.M."/>
            <person name="Chiu K.P."/>
            <person name="Choudhary V."/>
            <person name="Christoffels A."/>
            <person name="Clutterbuck D.R."/>
            <person name="Crowe M.L."/>
            <person name="Dalla E."/>
            <person name="Dalrymple B.P."/>
            <person name="de Bono B."/>
            <person name="Della Gatta G."/>
            <person name="di Bernardo D."/>
            <person name="Down T."/>
            <person name="Engstrom P."/>
            <person name="Fagiolini M."/>
            <person name="Faulkner G."/>
            <person name="Fletcher C.F."/>
            <person name="Fukushima T."/>
            <person name="Furuno M."/>
            <person name="Futaki S."/>
            <person name="Gariboldi M."/>
            <person name="Georgii-Hemming P."/>
            <person name="Gingeras T.R."/>
            <person name="Gojobori T."/>
            <person name="Green R.E."/>
            <person name="Gustincich S."/>
            <person name="Harbers M."/>
            <person name="Hayashi Y."/>
            <person name="Hensch T.K."/>
            <person name="Hirokawa N."/>
            <person name="Hill D."/>
            <person name="Huminiecki L."/>
            <person name="Iacono M."/>
            <person name="Ikeo K."/>
            <person name="Iwama A."/>
            <person name="Ishikawa T."/>
            <person name="Jakt M."/>
            <person name="Kanapin A."/>
            <person name="Katoh M."/>
            <person name="Kawasawa Y."/>
            <person name="Kelso J."/>
            <person name="Kitamura H."/>
            <person name="Kitano H."/>
            <person name="Kollias G."/>
            <person name="Krishnan S.P."/>
            <person name="Kruger A."/>
            <person name="Kummerfeld S.K."/>
            <person name="Kurochkin I.V."/>
            <person name="Lareau L.F."/>
            <person name="Lazarevic D."/>
            <person name="Lipovich L."/>
            <person name="Liu J."/>
            <person name="Liuni S."/>
            <person name="McWilliam S."/>
            <person name="Madan Babu M."/>
            <person name="Madera M."/>
            <person name="Marchionni L."/>
            <person name="Matsuda H."/>
            <person name="Matsuzawa S."/>
            <person name="Miki H."/>
            <person name="Mignone F."/>
            <person name="Miyake S."/>
            <person name="Morris K."/>
            <person name="Mottagui-Tabar S."/>
            <person name="Mulder N."/>
            <person name="Nakano N."/>
            <person name="Nakauchi H."/>
            <person name="Ng P."/>
            <person name="Nilsson R."/>
            <person name="Nishiguchi S."/>
            <person name="Nishikawa S."/>
            <person name="Nori F."/>
            <person name="Ohara O."/>
            <person name="Okazaki Y."/>
            <person name="Orlando V."/>
            <person name="Pang K.C."/>
            <person name="Pavan W.J."/>
            <person name="Pavesi G."/>
            <person name="Pesole G."/>
            <person name="Petrovsky N."/>
            <person name="Piazza S."/>
            <person name="Reed J."/>
            <person name="Reid J.F."/>
            <person name="Ring B.Z."/>
            <person name="Ringwald M."/>
            <person name="Rost B."/>
            <person name="Ruan Y."/>
            <person name="Salzberg S.L."/>
            <person name="Sandelin A."/>
            <person name="Schneider C."/>
            <person name="Schoenbach C."/>
            <person name="Sekiguchi K."/>
            <person name="Semple C.A."/>
            <person name="Seno S."/>
            <person name="Sessa L."/>
            <person name="Sheng Y."/>
            <person name="Shibata Y."/>
            <person name="Shimada H."/>
            <person name="Shimada K."/>
            <person name="Silva D."/>
            <person name="Sinclair B."/>
            <person name="Sperling S."/>
            <person name="Stupka E."/>
            <person name="Sugiura K."/>
            <person name="Sultana R."/>
            <person name="Takenaka Y."/>
            <person name="Taki K."/>
            <person name="Tammoja K."/>
            <person name="Tan S.L."/>
            <person name="Tang S."/>
            <person name="Taylor M.S."/>
            <person name="Tegner J."/>
            <person name="Teichmann S.A."/>
            <person name="Ueda H.R."/>
            <person name="van Nimwegen E."/>
            <person name="Verardo R."/>
            <person name="Wei C.L."/>
            <person name="Yagi K."/>
            <person name="Yamanishi H."/>
            <person name="Zabarovsky E."/>
            <person name="Zhu S."/>
            <person name="Zimmer A."/>
            <person name="Hide W."/>
            <person name="Bult C."/>
            <person name="Grimmond S.M."/>
            <person name="Teasdale R.D."/>
            <person name="Liu E.T."/>
            <person name="Brusic V."/>
            <person name="Quackenbush J."/>
            <person name="Wahlestedt C."/>
            <person name="Mattick J.S."/>
            <person name="Hume D.A."/>
            <person name="Kai C."/>
            <person name="Sasaki D."/>
            <person name="Tomaru Y."/>
            <person name="Fukuda S."/>
            <person name="Kanamori-Katayama M."/>
            <person name="Suzuki M."/>
            <person name="Aoki J."/>
            <person name="Arakawa T."/>
            <person name="Iida J."/>
            <person name="Imamura K."/>
            <person name="Itoh M."/>
            <person name="Kato T."/>
            <person name="Kawaji H."/>
            <person name="Kawagashira N."/>
            <person name="Kawashima T."/>
            <person name="Kojima M."/>
            <person name="Kondo S."/>
            <person name="Konno H."/>
            <person name="Nakano K."/>
            <person name="Ninomiya N."/>
            <person name="Nishio T."/>
            <person name="Okada M."/>
            <person name="Plessy C."/>
            <person name="Shibata K."/>
            <person name="Shiraki T."/>
            <person name="Suzuki S."/>
            <person name="Tagami M."/>
            <person name="Waki K."/>
            <person name="Watahiki A."/>
            <person name="Okamura-Oho Y."/>
            <person name="Suzuki H."/>
            <person name="Kawai J."/>
            <person name="Hayashizaki Y."/>
        </authorList>
    </citation>
    <scope>NUCLEOTIDE SEQUENCE [LARGE SCALE MRNA]</scope>
    <source>
        <strain>C57BL/6J</strain>
        <tissue>Colon</tissue>
        <tissue>Spinal cord</tissue>
    </source>
</reference>
<reference key="3">
    <citation type="submission" date="2005-07" db="EMBL/GenBank/DDBJ databases">
        <authorList>
            <person name="Mural R.J."/>
            <person name="Adams M.D."/>
            <person name="Myers E.W."/>
            <person name="Smith H.O."/>
            <person name="Venter J.C."/>
        </authorList>
    </citation>
    <scope>NUCLEOTIDE SEQUENCE [LARGE SCALE GENOMIC DNA]</scope>
</reference>
<reference key="4">
    <citation type="journal article" date="2004" name="Genome Res.">
        <title>The status, quality, and expansion of the NIH full-length cDNA project: the Mammalian Gene Collection (MGC).</title>
        <authorList>
            <consortium name="The MGC Project Team"/>
        </authorList>
    </citation>
    <scope>NUCLEOTIDE SEQUENCE [LARGE SCALE MRNA]</scope>
    <source>
        <tissue>Brain</tissue>
    </source>
</reference>
<reference key="5">
    <citation type="journal article" date="2006" name="J. Biol. Chem.">
        <title>Structural and functional characterization of HQL-79, an orally selective inhibitor of human hematopoietic prostaglandin D synthase.</title>
        <authorList>
            <person name="Aritake K."/>
            <person name="Kado Y."/>
            <person name="Inoue T."/>
            <person name="Miyano M."/>
            <person name="Urade Y."/>
        </authorList>
    </citation>
    <scope>FUNCTION</scope>
</reference>
<reference key="6">
    <citation type="journal article" date="2010" name="Cell">
        <title>A tissue-specific atlas of mouse protein phosphorylation and expression.</title>
        <authorList>
            <person name="Huttlin E.L."/>
            <person name="Jedrychowski M.P."/>
            <person name="Elias J.E."/>
            <person name="Goswami T."/>
            <person name="Rad R."/>
            <person name="Beausoleil S.A."/>
            <person name="Villen J."/>
            <person name="Haas W."/>
            <person name="Sowa M.E."/>
            <person name="Gygi S.P."/>
        </authorList>
    </citation>
    <scope>IDENTIFICATION BY MASS SPECTROMETRY [LARGE SCALE ANALYSIS]</scope>
    <source>
        <tissue>Spleen</tissue>
    </source>
</reference>
<keyword id="KW-0963">Cytoplasm</keyword>
<keyword id="KW-0275">Fatty acid biosynthesis</keyword>
<keyword id="KW-0276">Fatty acid metabolism</keyword>
<keyword id="KW-0413">Isomerase</keyword>
<keyword id="KW-0444">Lipid biosynthesis</keyword>
<keyword id="KW-0443">Lipid metabolism</keyword>
<keyword id="KW-0643">Prostaglandin biosynthesis</keyword>
<keyword id="KW-0644">Prostaglandin metabolism</keyword>
<keyword id="KW-1185">Reference proteome</keyword>
<keyword id="KW-0808">Transferase</keyword>
<proteinExistence type="evidence at protein level"/>
<accession>Q9JHF7</accession>
<accession>Q14AR4</accession>
<accession>Q8CA80</accession>
<dbReference type="EC" id="5.3.99.2" evidence="3"/>
<dbReference type="EC" id="2.5.1.18" evidence="3"/>
<dbReference type="EMBL" id="AB008824">
    <property type="protein sequence ID" value="BAA97557.1"/>
    <property type="molecule type" value="Genomic_DNA"/>
</dbReference>
<dbReference type="EMBL" id="D82072">
    <property type="protein sequence ID" value="BAA96845.1"/>
    <property type="molecule type" value="mRNA"/>
</dbReference>
<dbReference type="EMBL" id="AK020246">
    <property type="protein sequence ID" value="BAB32037.1"/>
    <property type="molecule type" value="mRNA"/>
</dbReference>
<dbReference type="EMBL" id="AK039392">
    <property type="protein sequence ID" value="BAC30336.1"/>
    <property type="molecule type" value="mRNA"/>
</dbReference>
<dbReference type="EMBL" id="CH466523">
    <property type="protein sequence ID" value="EDK98774.1"/>
    <property type="molecule type" value="Genomic_DNA"/>
</dbReference>
<dbReference type="EMBL" id="BC116735">
    <property type="protein sequence ID" value="AAI16736.1"/>
    <property type="molecule type" value="mRNA"/>
</dbReference>
<dbReference type="EMBL" id="BC116737">
    <property type="protein sequence ID" value="AAI16738.1"/>
    <property type="molecule type" value="mRNA"/>
</dbReference>
<dbReference type="CCDS" id="CCDS20205.1"/>
<dbReference type="RefSeq" id="NP_062328.3">
    <property type="nucleotide sequence ID" value="NM_019455.4"/>
</dbReference>
<dbReference type="SMR" id="Q9JHF7"/>
<dbReference type="FunCoup" id="Q9JHF7">
    <property type="interactions" value="912"/>
</dbReference>
<dbReference type="STRING" id="10090.ENSMUSP00000031982"/>
<dbReference type="BindingDB" id="Q9JHF7"/>
<dbReference type="ChEMBL" id="CHEMBL3309049"/>
<dbReference type="SwissLipids" id="SLP:000000829"/>
<dbReference type="GlyGen" id="Q9JHF7">
    <property type="glycosylation" value="1 site"/>
</dbReference>
<dbReference type="iPTMnet" id="Q9JHF7"/>
<dbReference type="PhosphoSitePlus" id="Q9JHF7"/>
<dbReference type="PaxDb" id="10090-ENSMUSP00000031982"/>
<dbReference type="PeptideAtlas" id="Q9JHF7"/>
<dbReference type="ProteomicsDB" id="267014"/>
<dbReference type="Antibodypedia" id="14738">
    <property type="antibodies" value="110 antibodies from 27 providers"/>
</dbReference>
<dbReference type="DNASU" id="54486"/>
<dbReference type="Ensembl" id="ENSMUST00000031982.5">
    <property type="protein sequence ID" value="ENSMUSP00000031982.5"/>
    <property type="gene ID" value="ENSMUSG00000029919.6"/>
</dbReference>
<dbReference type="GeneID" id="54486"/>
<dbReference type="KEGG" id="mmu:54486"/>
<dbReference type="UCSC" id="uc009cee.2">
    <property type="organism name" value="mouse"/>
</dbReference>
<dbReference type="AGR" id="MGI:1859384"/>
<dbReference type="CTD" id="27306"/>
<dbReference type="MGI" id="MGI:1859384">
    <property type="gene designation" value="Hpgds"/>
</dbReference>
<dbReference type="VEuPathDB" id="HostDB:ENSMUSG00000029919"/>
<dbReference type="eggNOG" id="KOG1695">
    <property type="taxonomic scope" value="Eukaryota"/>
</dbReference>
<dbReference type="GeneTree" id="ENSGT00940000160278"/>
<dbReference type="HOGENOM" id="CLU_039475_1_0_1"/>
<dbReference type="InParanoid" id="Q9JHF7"/>
<dbReference type="OMA" id="CEMIDET"/>
<dbReference type="OrthoDB" id="414243at2759"/>
<dbReference type="PhylomeDB" id="Q9JHF7"/>
<dbReference type="TreeFam" id="TF105321"/>
<dbReference type="BRENDA" id="5.3.99.2">
    <property type="organism ID" value="3474"/>
</dbReference>
<dbReference type="Reactome" id="R-MMU-156590">
    <property type="pathway name" value="Glutathione conjugation"/>
</dbReference>
<dbReference type="Reactome" id="R-MMU-2162123">
    <property type="pathway name" value="Synthesis of Prostaglandins (PG) and Thromboxanes (TX)"/>
</dbReference>
<dbReference type="SABIO-RK" id="Q9JHF7"/>
<dbReference type="BioGRID-ORCS" id="54486">
    <property type="hits" value="1 hit in 79 CRISPR screens"/>
</dbReference>
<dbReference type="ChiTaRS" id="Hpgds">
    <property type="organism name" value="mouse"/>
</dbReference>
<dbReference type="PRO" id="PR:Q9JHF7"/>
<dbReference type="Proteomes" id="UP000000589">
    <property type="component" value="Chromosome 6"/>
</dbReference>
<dbReference type="RNAct" id="Q9JHF7">
    <property type="molecule type" value="protein"/>
</dbReference>
<dbReference type="Bgee" id="ENSMUSG00000029919">
    <property type="expression patterns" value="Expressed in undifferentiated genital tubercle and 112 other cell types or tissues"/>
</dbReference>
<dbReference type="GO" id="GO:0005829">
    <property type="term" value="C:cytosol"/>
    <property type="evidence" value="ECO:0007669"/>
    <property type="project" value="Ensembl"/>
</dbReference>
<dbReference type="GO" id="GO:0005654">
    <property type="term" value="C:nucleoplasm"/>
    <property type="evidence" value="ECO:0007669"/>
    <property type="project" value="Ensembl"/>
</dbReference>
<dbReference type="GO" id="GO:0005509">
    <property type="term" value="F:calcium ion binding"/>
    <property type="evidence" value="ECO:0000250"/>
    <property type="project" value="UniProtKB"/>
</dbReference>
<dbReference type="GO" id="GO:0004364">
    <property type="term" value="F:glutathione transferase activity"/>
    <property type="evidence" value="ECO:0000266"/>
    <property type="project" value="MGI"/>
</dbReference>
<dbReference type="GO" id="GO:0000287">
    <property type="term" value="F:magnesium ion binding"/>
    <property type="evidence" value="ECO:0000250"/>
    <property type="project" value="UniProtKB"/>
</dbReference>
<dbReference type="GO" id="GO:0004667">
    <property type="term" value="F:prostaglandin-D synthase activity"/>
    <property type="evidence" value="ECO:0000314"/>
    <property type="project" value="MGI"/>
</dbReference>
<dbReference type="GO" id="GO:0042803">
    <property type="term" value="F:protein homodimerization activity"/>
    <property type="evidence" value="ECO:0007669"/>
    <property type="project" value="Ensembl"/>
</dbReference>
<dbReference type="GO" id="GO:2000255">
    <property type="term" value="P:negative regulation of male germ cell proliferation"/>
    <property type="evidence" value="ECO:0000316"/>
    <property type="project" value="MGI"/>
</dbReference>
<dbReference type="GO" id="GO:0001516">
    <property type="term" value="P:prostaglandin biosynthetic process"/>
    <property type="evidence" value="ECO:0007669"/>
    <property type="project" value="UniProtKB-KW"/>
</dbReference>
<dbReference type="GO" id="GO:0006693">
    <property type="term" value="P:prostaglandin metabolic process"/>
    <property type="evidence" value="ECO:0000314"/>
    <property type="project" value="MGI"/>
</dbReference>
<dbReference type="GO" id="GO:0009624">
    <property type="term" value="P:response to nematode"/>
    <property type="evidence" value="ECO:0000314"/>
    <property type="project" value="MGI"/>
</dbReference>
<dbReference type="GO" id="GO:0010269">
    <property type="term" value="P:response to selenium ion"/>
    <property type="evidence" value="ECO:0000314"/>
    <property type="project" value="MGI"/>
</dbReference>
<dbReference type="CDD" id="cd10295">
    <property type="entry name" value="GST_C_Sigma"/>
    <property type="match status" value="1"/>
</dbReference>
<dbReference type="CDD" id="cd03039">
    <property type="entry name" value="GST_N_Sigma_like"/>
    <property type="match status" value="1"/>
</dbReference>
<dbReference type="FunFam" id="1.20.1050.10:FF:000035">
    <property type="entry name" value="Hematopoietic prostaglandin D synthase"/>
    <property type="match status" value="1"/>
</dbReference>
<dbReference type="FunFam" id="3.40.30.10:FF:000035">
    <property type="entry name" value="hematopoietic prostaglandin D synthase"/>
    <property type="match status" value="1"/>
</dbReference>
<dbReference type="Gene3D" id="1.20.1050.10">
    <property type="match status" value="1"/>
</dbReference>
<dbReference type="Gene3D" id="3.40.30.10">
    <property type="entry name" value="Glutaredoxin"/>
    <property type="match status" value="1"/>
</dbReference>
<dbReference type="InterPro" id="IPR010987">
    <property type="entry name" value="Glutathione-S-Trfase_C-like"/>
</dbReference>
<dbReference type="InterPro" id="IPR036282">
    <property type="entry name" value="Glutathione-S-Trfase_C_sf"/>
</dbReference>
<dbReference type="InterPro" id="IPR040079">
    <property type="entry name" value="Glutathione_S-Trfase"/>
</dbReference>
<dbReference type="InterPro" id="IPR004045">
    <property type="entry name" value="Glutathione_S-Trfase_N"/>
</dbReference>
<dbReference type="InterPro" id="IPR004046">
    <property type="entry name" value="GST_C"/>
</dbReference>
<dbReference type="InterPro" id="IPR050213">
    <property type="entry name" value="GST_superfamily"/>
</dbReference>
<dbReference type="InterPro" id="IPR036249">
    <property type="entry name" value="Thioredoxin-like_sf"/>
</dbReference>
<dbReference type="PANTHER" id="PTHR11571">
    <property type="entry name" value="GLUTATHIONE S-TRANSFERASE"/>
    <property type="match status" value="1"/>
</dbReference>
<dbReference type="PANTHER" id="PTHR11571:SF224">
    <property type="entry name" value="HEMATOPOIETIC PROSTAGLANDIN D SYNTHASE"/>
    <property type="match status" value="1"/>
</dbReference>
<dbReference type="Pfam" id="PF14497">
    <property type="entry name" value="GST_C_3"/>
    <property type="match status" value="1"/>
</dbReference>
<dbReference type="Pfam" id="PF02798">
    <property type="entry name" value="GST_N"/>
    <property type="match status" value="1"/>
</dbReference>
<dbReference type="SFLD" id="SFLDG01205">
    <property type="entry name" value="AMPS.1"/>
    <property type="match status" value="1"/>
</dbReference>
<dbReference type="SFLD" id="SFLDS00019">
    <property type="entry name" value="Glutathione_Transferase_(cytos"/>
    <property type="match status" value="1"/>
</dbReference>
<dbReference type="SUPFAM" id="SSF47616">
    <property type="entry name" value="GST C-terminal domain-like"/>
    <property type="match status" value="1"/>
</dbReference>
<dbReference type="SUPFAM" id="SSF52833">
    <property type="entry name" value="Thioredoxin-like"/>
    <property type="match status" value="1"/>
</dbReference>
<dbReference type="PROSITE" id="PS50405">
    <property type="entry name" value="GST_CTER"/>
    <property type="match status" value="1"/>
</dbReference>
<dbReference type="PROSITE" id="PS50404">
    <property type="entry name" value="GST_NTER"/>
    <property type="match status" value="1"/>
</dbReference>
<feature type="chain" id="PRO_0000185935" description="Hematopoietic prostaglandin D synthase">
    <location>
        <begin position="1"/>
        <end position="199"/>
    </location>
</feature>
<feature type="domain" description="GST N-terminal">
    <location>
        <begin position="2"/>
        <end position="79"/>
    </location>
</feature>
<feature type="domain" description="GST C-terminal">
    <location>
        <begin position="81"/>
        <end position="199"/>
    </location>
</feature>
<feature type="binding site" evidence="2">
    <location>
        <position position="8"/>
    </location>
    <ligand>
        <name>glutathione</name>
        <dbReference type="ChEBI" id="CHEBI:57925"/>
    </ligand>
</feature>
<feature type="binding site" evidence="2">
    <location>
        <position position="14"/>
    </location>
    <ligand>
        <name>glutathione</name>
        <dbReference type="ChEBI" id="CHEBI:57925"/>
    </ligand>
</feature>
<feature type="binding site" evidence="2">
    <location>
        <position position="39"/>
    </location>
    <ligand>
        <name>glutathione</name>
        <dbReference type="ChEBI" id="CHEBI:57925"/>
    </ligand>
</feature>
<feature type="binding site" evidence="2">
    <location>
        <begin position="49"/>
        <end position="51"/>
    </location>
    <ligand>
        <name>glutathione</name>
        <dbReference type="ChEBI" id="CHEBI:57925"/>
    </ligand>
</feature>
<feature type="binding site" evidence="2">
    <location>
        <begin position="63"/>
        <end position="64"/>
    </location>
    <ligand>
        <name>glutathione</name>
        <dbReference type="ChEBI" id="CHEBI:57925"/>
    </ligand>
</feature>
<feature type="sequence conflict" description="In Ref. 2; BAC30336." evidence="5" ref="2">
    <original>D</original>
    <variation>G</variation>
    <location>
        <position position="108"/>
    </location>
</feature>